<comment type="function">
    <text evidence="1">Forms part of the ribosomal stalk which helps the ribosome interact with GTP-bound translation factors.</text>
</comment>
<comment type="subunit">
    <text evidence="1">Part of the ribosomal stalk of the 50S ribosomal subunit. Interacts with L10 and the large rRNA to form the base of the stalk. L10 forms an elongated spine to which L12 dimers bind in a sequential fashion forming a multimeric L10(L12)X complex.</text>
</comment>
<comment type="PTM">
    <text evidence="1">One or more lysine residues are methylated.</text>
</comment>
<comment type="similarity">
    <text evidence="1">Belongs to the universal ribosomal protein uL11 family.</text>
</comment>
<gene>
    <name evidence="1" type="primary">rplK</name>
    <name type="ordered locus">BBR47_02060</name>
</gene>
<reference key="1">
    <citation type="submission" date="2005-03" db="EMBL/GenBank/DDBJ databases">
        <title>Brevibacillus brevis strain 47, complete genome.</title>
        <authorList>
            <person name="Hosoyama A."/>
            <person name="Yamada R."/>
            <person name="Hongo Y."/>
            <person name="Terui Y."/>
            <person name="Ankai A."/>
            <person name="Masuyama W."/>
            <person name="Sekiguchi M."/>
            <person name="Takeda T."/>
            <person name="Asano K."/>
            <person name="Ohji S."/>
            <person name="Ichikawa N."/>
            <person name="Narita S."/>
            <person name="Aoki N."/>
            <person name="Miura H."/>
            <person name="Matsushita S."/>
            <person name="Sekigawa T."/>
            <person name="Yamagata H."/>
            <person name="Yoshikawa H."/>
            <person name="Udaka S."/>
            <person name="Tanikawa S."/>
            <person name="Fujita N."/>
        </authorList>
    </citation>
    <scope>NUCLEOTIDE SEQUENCE [LARGE SCALE GENOMIC DNA]</scope>
    <source>
        <strain>47 / JCM 6285 / NBRC 100599</strain>
    </source>
</reference>
<evidence type="ECO:0000255" key="1">
    <source>
        <dbReference type="HAMAP-Rule" id="MF_00736"/>
    </source>
</evidence>
<evidence type="ECO:0000305" key="2"/>
<sequence>MAKKVIRVIKLQIPAGKANPAPPVGPALGQAGVNIMGFCKEFNARTESEVGMIIPVEITVFEDRSFTFITKTPPAAVLLKKAAGIESGSGVPNKTKVATLKRDKVREIAELKRPDLNAASVEAAMRMVEGTARSMGIVIED</sequence>
<name>RL11_BREBN</name>
<dbReference type="EMBL" id="AP008955">
    <property type="protein sequence ID" value="BAH41183.1"/>
    <property type="molecule type" value="Genomic_DNA"/>
</dbReference>
<dbReference type="RefSeq" id="WP_005828886.1">
    <property type="nucleotide sequence ID" value="NC_012491.1"/>
</dbReference>
<dbReference type="SMR" id="C0ZIG5"/>
<dbReference type="STRING" id="358681.BBR47_02060"/>
<dbReference type="GeneID" id="95752130"/>
<dbReference type="KEGG" id="bbe:BBR47_02060"/>
<dbReference type="eggNOG" id="COG0080">
    <property type="taxonomic scope" value="Bacteria"/>
</dbReference>
<dbReference type="HOGENOM" id="CLU_074237_2_1_9"/>
<dbReference type="Proteomes" id="UP000001877">
    <property type="component" value="Chromosome"/>
</dbReference>
<dbReference type="GO" id="GO:0022625">
    <property type="term" value="C:cytosolic large ribosomal subunit"/>
    <property type="evidence" value="ECO:0007669"/>
    <property type="project" value="TreeGrafter"/>
</dbReference>
<dbReference type="GO" id="GO:0070180">
    <property type="term" value="F:large ribosomal subunit rRNA binding"/>
    <property type="evidence" value="ECO:0007669"/>
    <property type="project" value="UniProtKB-UniRule"/>
</dbReference>
<dbReference type="GO" id="GO:0003735">
    <property type="term" value="F:structural constituent of ribosome"/>
    <property type="evidence" value="ECO:0007669"/>
    <property type="project" value="InterPro"/>
</dbReference>
<dbReference type="GO" id="GO:0006412">
    <property type="term" value="P:translation"/>
    <property type="evidence" value="ECO:0007669"/>
    <property type="project" value="UniProtKB-UniRule"/>
</dbReference>
<dbReference type="CDD" id="cd00349">
    <property type="entry name" value="Ribosomal_L11"/>
    <property type="match status" value="1"/>
</dbReference>
<dbReference type="FunFam" id="1.10.10.250:FF:000001">
    <property type="entry name" value="50S ribosomal protein L11"/>
    <property type="match status" value="1"/>
</dbReference>
<dbReference type="FunFam" id="3.30.1550.10:FF:000001">
    <property type="entry name" value="50S ribosomal protein L11"/>
    <property type="match status" value="1"/>
</dbReference>
<dbReference type="Gene3D" id="1.10.10.250">
    <property type="entry name" value="Ribosomal protein L11, C-terminal domain"/>
    <property type="match status" value="1"/>
</dbReference>
<dbReference type="Gene3D" id="3.30.1550.10">
    <property type="entry name" value="Ribosomal protein L11/L12, N-terminal domain"/>
    <property type="match status" value="1"/>
</dbReference>
<dbReference type="HAMAP" id="MF_00736">
    <property type="entry name" value="Ribosomal_uL11"/>
    <property type="match status" value="1"/>
</dbReference>
<dbReference type="InterPro" id="IPR000911">
    <property type="entry name" value="Ribosomal_uL11"/>
</dbReference>
<dbReference type="InterPro" id="IPR006519">
    <property type="entry name" value="Ribosomal_uL11_bac-typ"/>
</dbReference>
<dbReference type="InterPro" id="IPR020783">
    <property type="entry name" value="Ribosomal_uL11_C"/>
</dbReference>
<dbReference type="InterPro" id="IPR036769">
    <property type="entry name" value="Ribosomal_uL11_C_sf"/>
</dbReference>
<dbReference type="InterPro" id="IPR020785">
    <property type="entry name" value="Ribosomal_uL11_CS"/>
</dbReference>
<dbReference type="InterPro" id="IPR020784">
    <property type="entry name" value="Ribosomal_uL11_N"/>
</dbReference>
<dbReference type="InterPro" id="IPR036796">
    <property type="entry name" value="Ribosomal_uL11_N_sf"/>
</dbReference>
<dbReference type="NCBIfam" id="TIGR01632">
    <property type="entry name" value="L11_bact"/>
    <property type="match status" value="1"/>
</dbReference>
<dbReference type="PANTHER" id="PTHR11661">
    <property type="entry name" value="60S RIBOSOMAL PROTEIN L12"/>
    <property type="match status" value="1"/>
</dbReference>
<dbReference type="PANTHER" id="PTHR11661:SF1">
    <property type="entry name" value="LARGE RIBOSOMAL SUBUNIT PROTEIN UL11M"/>
    <property type="match status" value="1"/>
</dbReference>
<dbReference type="Pfam" id="PF00298">
    <property type="entry name" value="Ribosomal_L11"/>
    <property type="match status" value="1"/>
</dbReference>
<dbReference type="Pfam" id="PF03946">
    <property type="entry name" value="Ribosomal_L11_N"/>
    <property type="match status" value="1"/>
</dbReference>
<dbReference type="SMART" id="SM00649">
    <property type="entry name" value="RL11"/>
    <property type="match status" value="1"/>
</dbReference>
<dbReference type="SUPFAM" id="SSF54747">
    <property type="entry name" value="Ribosomal L11/L12e N-terminal domain"/>
    <property type="match status" value="1"/>
</dbReference>
<dbReference type="SUPFAM" id="SSF46906">
    <property type="entry name" value="Ribosomal protein L11, C-terminal domain"/>
    <property type="match status" value="1"/>
</dbReference>
<dbReference type="PROSITE" id="PS00359">
    <property type="entry name" value="RIBOSOMAL_L11"/>
    <property type="match status" value="1"/>
</dbReference>
<proteinExistence type="inferred from homology"/>
<keyword id="KW-0488">Methylation</keyword>
<keyword id="KW-1185">Reference proteome</keyword>
<keyword id="KW-0687">Ribonucleoprotein</keyword>
<keyword id="KW-0689">Ribosomal protein</keyword>
<keyword id="KW-0694">RNA-binding</keyword>
<keyword id="KW-0699">rRNA-binding</keyword>
<protein>
    <recommendedName>
        <fullName evidence="1">Large ribosomal subunit protein uL11</fullName>
    </recommendedName>
    <alternativeName>
        <fullName evidence="2">50S ribosomal protein L11</fullName>
    </alternativeName>
</protein>
<organism>
    <name type="scientific">Brevibacillus brevis (strain 47 / JCM 6285 / NBRC 100599)</name>
    <dbReference type="NCBI Taxonomy" id="358681"/>
    <lineage>
        <taxon>Bacteria</taxon>
        <taxon>Bacillati</taxon>
        <taxon>Bacillota</taxon>
        <taxon>Bacilli</taxon>
        <taxon>Bacillales</taxon>
        <taxon>Paenibacillaceae</taxon>
        <taxon>Brevibacillus</taxon>
    </lineage>
</organism>
<accession>C0ZIG5</accession>
<feature type="chain" id="PRO_1000195586" description="Large ribosomal subunit protein uL11">
    <location>
        <begin position="1"/>
        <end position="141"/>
    </location>
</feature>